<name>GLHA_EQUAS</name>
<comment type="function">
    <text evidence="2">Shared alpha chain of the active heterodimeric glycoprotein hormones thyrotropin/thyroid stimulating hormone/TSH, lutropin/luteinizing hormone/LH and follitropin/follicle stimulating hormone/FSH. These hormones bind specific receptors on target cells that in turn activate downstream signaling pathways.</text>
</comment>
<comment type="subunit">
    <text evidence="2">Heterodimer. The active hormones thyrotropin, lutropin and follitropin are heterodimers composed of CGA, a common alpha chain described here and a unique beta chain which confers their biological specificity to the hormones: TSHB for thyrotropin, LHB for lutropin and FSHB for follitropin.</text>
</comment>
<comment type="subcellular location">
    <subcellularLocation>
        <location evidence="2">Secreted</location>
    </subcellularLocation>
</comment>
<comment type="similarity">
    <text evidence="3">Belongs to the glycoprotein hormones subunit alpha family.</text>
</comment>
<keyword id="KW-1015">Disulfide bond</keyword>
<keyword id="KW-0325">Glycoprotein</keyword>
<keyword id="KW-0372">Hormone</keyword>
<keyword id="KW-1185">Reference proteome</keyword>
<keyword id="KW-0964">Secreted</keyword>
<keyword id="KW-0732">Signal</keyword>
<sequence>MDYYRKHAAVILATLSVFLHILHSFPDGEFTTQDCPECKLKKNKYFSKLGVPIYQCMGCCFSRAYPTPARSKKTMLVPKNITSEATCCVAKAFIRVTLMGNIRLENHTQCYCSTCYHHKI</sequence>
<gene>
    <name type="primary">CGA</name>
</gene>
<dbReference type="EMBL" id="X85170">
    <property type="protein sequence ID" value="CAA59454.1"/>
    <property type="molecule type" value="mRNA"/>
</dbReference>
<dbReference type="PIR" id="S53062">
    <property type="entry name" value="S53062"/>
</dbReference>
<dbReference type="RefSeq" id="XP_014703937.1">
    <property type="nucleotide sequence ID" value="XM_014848451.1"/>
</dbReference>
<dbReference type="RefSeq" id="XP_014703938.1">
    <property type="nucleotide sequence ID" value="XM_014848452.1"/>
</dbReference>
<dbReference type="RefSeq" id="XP_070352896.1">
    <property type="nucleotide sequence ID" value="XM_070496795.1"/>
</dbReference>
<dbReference type="SMR" id="Q28365"/>
<dbReference type="GlyCosmos" id="Q28365">
    <property type="glycosylation" value="2 sites, No reported glycans"/>
</dbReference>
<dbReference type="GeneID" id="106835849"/>
<dbReference type="OMA" id="VKNHTDC"/>
<dbReference type="Proteomes" id="UP000694387">
    <property type="component" value="Unplaced"/>
</dbReference>
<dbReference type="GO" id="GO:0005615">
    <property type="term" value="C:extracellular space"/>
    <property type="evidence" value="ECO:0000250"/>
    <property type="project" value="UniProtKB"/>
</dbReference>
<dbReference type="GO" id="GO:0016914">
    <property type="term" value="C:follicle-stimulating hormone complex"/>
    <property type="evidence" value="ECO:0000250"/>
    <property type="project" value="UniProtKB"/>
</dbReference>
<dbReference type="GO" id="GO:0016913">
    <property type="term" value="F:follicle-stimulating hormone activity"/>
    <property type="evidence" value="ECO:0000250"/>
    <property type="project" value="UniProtKB"/>
</dbReference>
<dbReference type="GO" id="GO:0007186">
    <property type="term" value="P:G protein-coupled receptor signaling pathway"/>
    <property type="evidence" value="ECO:0000250"/>
    <property type="project" value="UniProtKB"/>
</dbReference>
<dbReference type="GO" id="GO:0010893">
    <property type="term" value="P:positive regulation of steroid biosynthetic process"/>
    <property type="evidence" value="ECO:0000250"/>
    <property type="project" value="UniProtKB"/>
</dbReference>
<dbReference type="GO" id="GO:0010469">
    <property type="term" value="P:regulation of signaling receptor activity"/>
    <property type="evidence" value="ECO:0000250"/>
    <property type="project" value="UniProtKB"/>
</dbReference>
<dbReference type="GO" id="GO:0006590">
    <property type="term" value="P:thyroid hormone generation"/>
    <property type="evidence" value="ECO:0007669"/>
    <property type="project" value="TreeGrafter"/>
</dbReference>
<dbReference type="FunFam" id="2.10.90.10:FF:000011">
    <property type="entry name" value="Glycoprotein hormones alpha chain"/>
    <property type="match status" value="1"/>
</dbReference>
<dbReference type="Gene3D" id="2.10.90.10">
    <property type="entry name" value="Cystine-knot cytokines"/>
    <property type="match status" value="1"/>
</dbReference>
<dbReference type="InterPro" id="IPR029034">
    <property type="entry name" value="Cystine-knot_cytokine"/>
</dbReference>
<dbReference type="InterPro" id="IPR000476">
    <property type="entry name" value="Glyco_hormone"/>
</dbReference>
<dbReference type="PANTHER" id="PTHR11509">
    <property type="entry name" value="GLYCOPROTEIN HORMONE ALPHA CHAIN"/>
    <property type="match status" value="1"/>
</dbReference>
<dbReference type="PANTHER" id="PTHR11509:SF0">
    <property type="entry name" value="GLYCOPROTEIN HORMONES ALPHA CHAIN"/>
    <property type="match status" value="1"/>
</dbReference>
<dbReference type="Pfam" id="PF00236">
    <property type="entry name" value="Hormone_6"/>
    <property type="match status" value="1"/>
</dbReference>
<dbReference type="PRINTS" id="PR00274">
    <property type="entry name" value="GLYCOHORMONE"/>
</dbReference>
<dbReference type="SMART" id="SM00067">
    <property type="entry name" value="GHA"/>
    <property type="match status" value="1"/>
</dbReference>
<dbReference type="SUPFAM" id="SSF57501">
    <property type="entry name" value="Cystine-knot cytokines"/>
    <property type="match status" value="1"/>
</dbReference>
<dbReference type="PROSITE" id="PS00779">
    <property type="entry name" value="GLYCO_HORMONE_ALPHA_1"/>
    <property type="match status" value="1"/>
</dbReference>
<dbReference type="PROSITE" id="PS00780">
    <property type="entry name" value="GLYCO_HORMONE_ALPHA_2"/>
    <property type="match status" value="1"/>
</dbReference>
<dbReference type="PROSITE" id="PS50277">
    <property type="entry name" value="GLYCO_HORMONE_ALPHA_3"/>
    <property type="match status" value="1"/>
</dbReference>
<organism>
    <name type="scientific">Equus asinus</name>
    <name type="common">Donkey</name>
    <name type="synonym">Equus africanus asinus</name>
    <dbReference type="NCBI Taxonomy" id="9793"/>
    <lineage>
        <taxon>Eukaryota</taxon>
        <taxon>Metazoa</taxon>
        <taxon>Chordata</taxon>
        <taxon>Craniata</taxon>
        <taxon>Vertebrata</taxon>
        <taxon>Euteleostomi</taxon>
        <taxon>Mammalia</taxon>
        <taxon>Eutheria</taxon>
        <taxon>Laurasiatheria</taxon>
        <taxon>Perissodactyla</taxon>
        <taxon>Equidae</taxon>
        <taxon>Equus</taxon>
    </lineage>
</organism>
<proteinExistence type="evidence at transcript level"/>
<evidence type="ECO:0000250" key="1"/>
<evidence type="ECO:0000250" key="2">
    <source>
        <dbReference type="UniProtKB" id="P01215"/>
    </source>
</evidence>
<evidence type="ECO:0000305" key="3"/>
<feature type="signal peptide" evidence="1">
    <location>
        <begin position="1"/>
        <end position="24"/>
    </location>
</feature>
<feature type="chain" id="PRO_0000011637" description="Glycoprotein hormones alpha chain">
    <location>
        <begin position="25"/>
        <end position="120"/>
    </location>
</feature>
<feature type="glycosylation site" description="N-linked (GlcNAc...) asparagine" evidence="2">
    <location>
        <position position="80"/>
    </location>
</feature>
<feature type="glycosylation site" description="N-linked (GlcNAc...) asparagine" evidence="2">
    <location>
        <position position="106"/>
    </location>
</feature>
<feature type="disulfide bond" evidence="2">
    <location>
        <begin position="35"/>
        <end position="59"/>
    </location>
</feature>
<feature type="disulfide bond" evidence="2">
    <location>
        <begin position="38"/>
        <end position="88"/>
    </location>
</feature>
<feature type="disulfide bond" evidence="2">
    <location>
        <begin position="56"/>
        <end position="110"/>
    </location>
</feature>
<feature type="disulfide bond" evidence="2">
    <location>
        <begin position="60"/>
        <end position="112"/>
    </location>
</feature>
<feature type="disulfide bond" evidence="2">
    <location>
        <begin position="87"/>
        <end position="115"/>
    </location>
</feature>
<reference key="1">
    <citation type="journal article" date="1996" name="J. Mol. Endocrinol.">
        <title>Cloning and analysis of the cDNA for the common alpha-subunit of the donkey pituitary glycoprotein hormones.</title>
        <authorList>
            <person name="Chopineau M."/>
            <person name="Stewart F."/>
        </authorList>
    </citation>
    <scope>NUCLEOTIDE SEQUENCE [MRNA]</scope>
</reference>
<accession>Q28365</accession>
<protein>
    <recommendedName>
        <fullName>Glycoprotein hormones alpha chain</fullName>
    </recommendedName>
    <alternativeName>
        <fullName>Anterior pituitary glycoprotein hormones common subunit alpha</fullName>
    </alternativeName>
    <alternativeName>
        <fullName>Follicle-stimulating hormone alpha chain</fullName>
        <shortName>FSH-alpha</shortName>
    </alternativeName>
    <alternativeName>
        <fullName>Follitropin alpha chain</fullName>
    </alternativeName>
    <alternativeName>
        <fullName>Luteinizing hormone alpha chain</fullName>
        <shortName>LSH-alpha</shortName>
    </alternativeName>
    <alternativeName>
        <fullName>Lutropin alpha chain</fullName>
    </alternativeName>
    <alternativeName>
        <fullName>Thyroid-stimulating hormone alpha chain</fullName>
        <shortName>TSH-alpha</shortName>
    </alternativeName>
    <alternativeName>
        <fullName>Thyrotropin alpha chain</fullName>
    </alternativeName>
</protein>